<accession>Q23294</accession>
<accession>Q1NZ29</accession>
<dbReference type="EMBL" id="Z68270">
    <property type="protein sequence ID" value="CAA92572.2"/>
    <property type="molecule type" value="Genomic_DNA"/>
</dbReference>
<dbReference type="EMBL" id="Z68270">
    <property type="protein sequence ID" value="CAJ90499.2"/>
    <property type="molecule type" value="Genomic_DNA"/>
</dbReference>
<dbReference type="RefSeq" id="NP_001041063.1">
    <molecule id="Q23294-1"/>
    <property type="nucleotide sequence ID" value="NM_001047598.3"/>
</dbReference>
<dbReference type="RefSeq" id="NP_001041064.2">
    <molecule id="Q23294-2"/>
    <property type="nucleotide sequence ID" value="NM_001047599.4"/>
</dbReference>
<dbReference type="BioGRID" id="42830">
    <property type="interactions" value="1"/>
</dbReference>
<dbReference type="FunCoup" id="Q23294">
    <property type="interactions" value="470"/>
</dbReference>
<dbReference type="IntAct" id="Q23294">
    <property type="interactions" value="1"/>
</dbReference>
<dbReference type="STRING" id="6239.ZC410.1a.1"/>
<dbReference type="PaxDb" id="6239-ZC410.1a"/>
<dbReference type="EnsemblMetazoa" id="ZC410.1a.1">
    <molecule id="Q23294-1"/>
    <property type="protein sequence ID" value="ZC410.1a.1"/>
    <property type="gene ID" value="WBGene00003610"/>
</dbReference>
<dbReference type="EnsemblMetazoa" id="ZC410.1b.1">
    <molecule id="Q23294-2"/>
    <property type="protein sequence ID" value="ZC410.1b.1"/>
    <property type="gene ID" value="WBGene00003610"/>
</dbReference>
<dbReference type="GeneID" id="177724"/>
<dbReference type="KEGG" id="cel:CELE_ZC410.1"/>
<dbReference type="UCSC" id="ZC410.1a">
    <molecule id="Q23294-1"/>
    <property type="organism name" value="c. elegans"/>
</dbReference>
<dbReference type="AGR" id="WB:WBGene00003610"/>
<dbReference type="CTD" id="177724"/>
<dbReference type="WormBase" id="ZC410.1a">
    <molecule id="Q23294-1"/>
    <property type="protein sequence ID" value="CE26841"/>
    <property type="gene ID" value="WBGene00003610"/>
    <property type="gene designation" value="nhr-11"/>
</dbReference>
<dbReference type="WormBase" id="ZC410.1b">
    <molecule id="Q23294-2"/>
    <property type="protein sequence ID" value="CE47367"/>
    <property type="gene ID" value="WBGene00003610"/>
    <property type="gene designation" value="nhr-11"/>
</dbReference>
<dbReference type="eggNOG" id="KOG3575">
    <property type="taxonomic scope" value="Eukaryota"/>
</dbReference>
<dbReference type="HOGENOM" id="CLU_007368_17_0_1"/>
<dbReference type="InParanoid" id="Q23294"/>
<dbReference type="OMA" id="GQAHRQM"/>
<dbReference type="OrthoDB" id="9996608at2759"/>
<dbReference type="PhylomeDB" id="Q23294"/>
<dbReference type="PRO" id="PR:Q23294"/>
<dbReference type="Proteomes" id="UP000001940">
    <property type="component" value="Chromosome IV"/>
</dbReference>
<dbReference type="Bgee" id="WBGene00003610">
    <property type="expression patterns" value="Expressed in pharyngeal muscle cell (C elegans) and 4 other cell types or tissues"/>
</dbReference>
<dbReference type="ExpressionAtlas" id="Q23294">
    <property type="expression patterns" value="baseline and differential"/>
</dbReference>
<dbReference type="GO" id="GO:0005634">
    <property type="term" value="C:nucleus"/>
    <property type="evidence" value="ECO:0000318"/>
    <property type="project" value="GO_Central"/>
</dbReference>
<dbReference type="GO" id="GO:0003700">
    <property type="term" value="F:DNA-binding transcription factor activity"/>
    <property type="evidence" value="ECO:0007669"/>
    <property type="project" value="InterPro"/>
</dbReference>
<dbReference type="GO" id="GO:0043565">
    <property type="term" value="F:sequence-specific DNA binding"/>
    <property type="evidence" value="ECO:0007669"/>
    <property type="project" value="InterPro"/>
</dbReference>
<dbReference type="GO" id="GO:0008270">
    <property type="term" value="F:zinc ion binding"/>
    <property type="evidence" value="ECO:0007669"/>
    <property type="project" value="UniProtKB-KW"/>
</dbReference>
<dbReference type="Gene3D" id="3.30.50.10">
    <property type="entry name" value="Erythroid Transcription Factor GATA-1, subunit A"/>
    <property type="match status" value="1"/>
</dbReference>
<dbReference type="Gene3D" id="1.10.565.10">
    <property type="entry name" value="Retinoid X Receptor"/>
    <property type="match status" value="1"/>
</dbReference>
<dbReference type="InterPro" id="IPR035500">
    <property type="entry name" value="NHR-like_dom_sf"/>
</dbReference>
<dbReference type="InterPro" id="IPR000536">
    <property type="entry name" value="Nucl_hrmn_rcpt_lig-bd"/>
</dbReference>
<dbReference type="InterPro" id="IPR001723">
    <property type="entry name" value="Nuclear_hrmn_rcpt"/>
</dbReference>
<dbReference type="InterPro" id="IPR001628">
    <property type="entry name" value="Znf_hrmn_rcpt"/>
</dbReference>
<dbReference type="InterPro" id="IPR013088">
    <property type="entry name" value="Znf_NHR/GATA"/>
</dbReference>
<dbReference type="PANTHER" id="PTHR46397:SF3">
    <property type="entry name" value="NR LBD DOMAIN-CONTAINING PROTEIN-RELATED"/>
    <property type="match status" value="1"/>
</dbReference>
<dbReference type="PANTHER" id="PTHR46397">
    <property type="entry name" value="NUCLEAR HORMONE RECEPTOR FAMILY-RELATED"/>
    <property type="match status" value="1"/>
</dbReference>
<dbReference type="Pfam" id="PF00104">
    <property type="entry name" value="Hormone_recep"/>
    <property type="match status" value="1"/>
</dbReference>
<dbReference type="Pfam" id="PF00105">
    <property type="entry name" value="zf-C4"/>
    <property type="match status" value="1"/>
</dbReference>
<dbReference type="PRINTS" id="PR00398">
    <property type="entry name" value="STRDHORMONER"/>
</dbReference>
<dbReference type="PRINTS" id="PR00047">
    <property type="entry name" value="STROIDFINGER"/>
</dbReference>
<dbReference type="SMART" id="SM00430">
    <property type="entry name" value="HOLI"/>
    <property type="match status" value="1"/>
</dbReference>
<dbReference type="SMART" id="SM00399">
    <property type="entry name" value="ZnF_C4"/>
    <property type="match status" value="1"/>
</dbReference>
<dbReference type="SUPFAM" id="SSF57716">
    <property type="entry name" value="Glucocorticoid receptor-like (DNA-binding domain)"/>
    <property type="match status" value="1"/>
</dbReference>
<dbReference type="SUPFAM" id="SSF48508">
    <property type="entry name" value="Nuclear receptor ligand-binding domain"/>
    <property type="match status" value="1"/>
</dbReference>
<dbReference type="PROSITE" id="PS51843">
    <property type="entry name" value="NR_LBD"/>
    <property type="match status" value="1"/>
</dbReference>
<dbReference type="PROSITE" id="PS00031">
    <property type="entry name" value="NUCLEAR_REC_DBD_1"/>
    <property type="match status" value="1"/>
</dbReference>
<dbReference type="PROSITE" id="PS51030">
    <property type="entry name" value="NUCLEAR_REC_DBD_2"/>
    <property type="match status" value="1"/>
</dbReference>
<sequence length="459" mass="52832">MGPLCAVCESPTAFTLHFGGRCCKACAAFFRRTIALDLKYECAADDPCEIHFKFPGMRLVCRECRLRKCYSAGMRSELVRSKRENFACTRRKDSRNNSDAAPNSNSPSTRQSSSPEEMDDWSFQMFEEKPKIEDLPLTPSISHPPLPTQLMPEESSRTSSFDGGYCSSYPSSSAATHPSPPGMLYSIENNSILQYYHSMETGLCSKRRIMYTNTGMDFILDTHANLQCPFTVNDLRPHDYRNFRGMLRHDFVMLFDYATRFPEFNSFTSHEKNMFYRQIVAVDFILSSAYYTAKLGQAHRQMVLTNGEYLNMDPLPMSGNEIDARRYFDCDEDFSKYRALMPMHIAIWEESIVPFSKLNVTFEEFCLLKALTVWQATYFKLTENGREKCRRQRNIIIGFLSKMCHSPGGGGEHRVGELLMSMNYLRESAQKLTTSYVMLTVFNVLNCDSMLHEMLNFQY</sequence>
<keyword id="KW-0025">Alternative splicing</keyword>
<keyword id="KW-0238">DNA-binding</keyword>
<keyword id="KW-0479">Metal-binding</keyword>
<keyword id="KW-0539">Nucleus</keyword>
<keyword id="KW-0675">Receptor</keyword>
<keyword id="KW-1185">Reference proteome</keyword>
<keyword id="KW-0804">Transcription</keyword>
<keyword id="KW-0805">Transcription regulation</keyword>
<keyword id="KW-0862">Zinc</keyword>
<keyword id="KW-0863">Zinc-finger</keyword>
<proteinExistence type="inferred from homology"/>
<comment type="function">
    <text>Orphan nuclear receptor.</text>
</comment>
<comment type="subcellular location">
    <subcellularLocation>
        <location evidence="1">Nucleus</location>
    </subcellularLocation>
</comment>
<comment type="alternative products">
    <event type="alternative splicing"/>
    <isoform>
        <id>Q23294-1</id>
        <name>a</name>
        <sequence type="displayed"/>
    </isoform>
    <isoform>
        <id>Q23294-2</id>
        <name>b</name>
        <sequence type="described" ref="VSP_020170"/>
    </isoform>
</comment>
<comment type="similarity">
    <text evidence="4">Belongs to the nuclear hormone receptor family.</text>
</comment>
<protein>
    <recommendedName>
        <fullName>Nuclear hormone receptor family member nhr-11</fullName>
    </recommendedName>
</protein>
<name>NHR11_CAEEL</name>
<feature type="chain" id="PRO_0000053764" description="Nuclear hormone receptor family member nhr-11">
    <location>
        <begin position="1"/>
        <end position="459"/>
    </location>
</feature>
<feature type="domain" description="NR LBD" evidence="2">
    <location>
        <begin position="188"/>
        <end position="458"/>
    </location>
</feature>
<feature type="DNA-binding region" description="Nuclear receptor" evidence="1">
    <location>
        <begin position="2"/>
        <end position="81"/>
    </location>
</feature>
<feature type="zinc finger region" description="NR C4-type" evidence="1">
    <location>
        <begin position="5"/>
        <end position="26"/>
    </location>
</feature>
<feature type="zinc finger region" description="NR C4-type" evidence="1">
    <location>
        <begin position="42"/>
        <end position="69"/>
    </location>
</feature>
<feature type="region of interest" description="Disordered" evidence="3">
    <location>
        <begin position="90"/>
        <end position="119"/>
    </location>
</feature>
<feature type="region of interest" description="Disordered" evidence="3">
    <location>
        <begin position="134"/>
        <end position="162"/>
    </location>
</feature>
<feature type="compositionally biased region" description="Low complexity" evidence="3">
    <location>
        <begin position="97"/>
        <end position="115"/>
    </location>
</feature>
<feature type="splice variant" id="VSP_020170" description="In isoform b." evidence="4">
    <location>
        <begin position="1"/>
        <end position="117"/>
    </location>
</feature>
<gene>
    <name type="primary">nhr-11</name>
    <name type="ORF">ZC410.1</name>
</gene>
<organism>
    <name type="scientific">Caenorhabditis elegans</name>
    <dbReference type="NCBI Taxonomy" id="6239"/>
    <lineage>
        <taxon>Eukaryota</taxon>
        <taxon>Metazoa</taxon>
        <taxon>Ecdysozoa</taxon>
        <taxon>Nematoda</taxon>
        <taxon>Chromadorea</taxon>
        <taxon>Rhabditida</taxon>
        <taxon>Rhabditina</taxon>
        <taxon>Rhabditomorpha</taxon>
        <taxon>Rhabditoidea</taxon>
        <taxon>Rhabditidae</taxon>
        <taxon>Peloderinae</taxon>
        <taxon>Caenorhabditis</taxon>
    </lineage>
</organism>
<evidence type="ECO:0000255" key="1">
    <source>
        <dbReference type="PROSITE-ProRule" id="PRU00407"/>
    </source>
</evidence>
<evidence type="ECO:0000255" key="2">
    <source>
        <dbReference type="PROSITE-ProRule" id="PRU01189"/>
    </source>
</evidence>
<evidence type="ECO:0000256" key="3">
    <source>
        <dbReference type="SAM" id="MobiDB-lite"/>
    </source>
</evidence>
<evidence type="ECO:0000305" key="4"/>
<reference key="1">
    <citation type="journal article" date="1998" name="Science">
        <title>Genome sequence of the nematode C. elegans: a platform for investigating biology.</title>
        <authorList>
            <consortium name="The C. elegans sequencing consortium"/>
        </authorList>
    </citation>
    <scope>NUCLEOTIDE SEQUENCE [LARGE SCALE GENOMIC DNA]</scope>
    <scope>ALTERNATIVE SPLICING</scope>
    <source>
        <strain>Bristol N2</strain>
    </source>
</reference>